<proteinExistence type="evidence at protein level"/>
<reference key="1">
    <citation type="journal article" date="1997" name="Genome Res.">
        <title>A 1.1-Mb transcript map of the hereditary hemochromatosis locus.</title>
        <authorList>
            <person name="Ruddy D.A."/>
            <person name="Kronmal G.S."/>
            <person name="Lee V.K."/>
            <person name="Mintier G.A."/>
            <person name="Quintana L."/>
            <person name="Domingo R. Jr."/>
            <person name="Meyer N.C."/>
            <person name="Irrinki A."/>
            <person name="McClelland E.E."/>
            <person name="Fullan A."/>
            <person name="Mapa F.A."/>
            <person name="Moore T."/>
            <person name="Thomas W."/>
            <person name="Loeb D.B."/>
            <person name="Harmon C."/>
            <person name="Tsuchihashi Z."/>
            <person name="Wolff R.K."/>
            <person name="Schatzman R.C."/>
            <person name="Feder J.N."/>
        </authorList>
    </citation>
    <scope>NUCLEOTIDE SEQUENCE [MRNA] (ISOFORM 1)</scope>
</reference>
<reference key="2">
    <citation type="submission" date="2003-05" db="EMBL/GenBank/DDBJ databases">
        <title>Cloning of human full-length CDSs in BD Creator(TM) system donor vector.</title>
        <authorList>
            <person name="Kalnine N."/>
            <person name="Chen X."/>
            <person name="Rolfs A."/>
            <person name="Halleck A."/>
            <person name="Hines L."/>
            <person name="Eisenstein S."/>
            <person name="Koundinya M."/>
            <person name="Raphael J."/>
            <person name="Moreira D."/>
            <person name="Kelley T."/>
            <person name="LaBaer J."/>
            <person name="Lin Y."/>
            <person name="Phelan M."/>
            <person name="Farmer A."/>
        </authorList>
    </citation>
    <scope>NUCLEOTIDE SEQUENCE [LARGE SCALE MRNA] (ISOFORM 1)</scope>
</reference>
<reference key="3">
    <citation type="journal article" date="2004" name="Nat. Genet.">
        <title>Complete sequencing and characterization of 21,243 full-length human cDNAs.</title>
        <authorList>
            <person name="Ota T."/>
            <person name="Suzuki Y."/>
            <person name="Nishikawa T."/>
            <person name="Otsuki T."/>
            <person name="Sugiyama T."/>
            <person name="Irie R."/>
            <person name="Wakamatsu A."/>
            <person name="Hayashi K."/>
            <person name="Sato H."/>
            <person name="Nagai K."/>
            <person name="Kimura K."/>
            <person name="Makita H."/>
            <person name="Sekine M."/>
            <person name="Obayashi M."/>
            <person name="Nishi T."/>
            <person name="Shibahara T."/>
            <person name="Tanaka T."/>
            <person name="Ishii S."/>
            <person name="Yamamoto J."/>
            <person name="Saito K."/>
            <person name="Kawai Y."/>
            <person name="Isono Y."/>
            <person name="Nakamura Y."/>
            <person name="Nagahari K."/>
            <person name="Murakami K."/>
            <person name="Yasuda T."/>
            <person name="Iwayanagi T."/>
            <person name="Wagatsuma M."/>
            <person name="Shiratori A."/>
            <person name="Sudo H."/>
            <person name="Hosoiri T."/>
            <person name="Kaku Y."/>
            <person name="Kodaira H."/>
            <person name="Kondo H."/>
            <person name="Sugawara M."/>
            <person name="Takahashi M."/>
            <person name="Kanda K."/>
            <person name="Yokoi T."/>
            <person name="Furuya T."/>
            <person name="Kikkawa E."/>
            <person name="Omura Y."/>
            <person name="Abe K."/>
            <person name="Kamihara K."/>
            <person name="Katsuta N."/>
            <person name="Sato K."/>
            <person name="Tanikawa M."/>
            <person name="Yamazaki M."/>
            <person name="Ninomiya K."/>
            <person name="Ishibashi T."/>
            <person name="Yamashita H."/>
            <person name="Murakawa K."/>
            <person name="Fujimori K."/>
            <person name="Tanai H."/>
            <person name="Kimata M."/>
            <person name="Watanabe M."/>
            <person name="Hiraoka S."/>
            <person name="Chiba Y."/>
            <person name="Ishida S."/>
            <person name="Ono Y."/>
            <person name="Takiguchi S."/>
            <person name="Watanabe S."/>
            <person name="Yosida M."/>
            <person name="Hotuta T."/>
            <person name="Kusano J."/>
            <person name="Kanehori K."/>
            <person name="Takahashi-Fujii A."/>
            <person name="Hara H."/>
            <person name="Tanase T.-O."/>
            <person name="Nomura Y."/>
            <person name="Togiya S."/>
            <person name="Komai F."/>
            <person name="Hara R."/>
            <person name="Takeuchi K."/>
            <person name="Arita M."/>
            <person name="Imose N."/>
            <person name="Musashino K."/>
            <person name="Yuuki H."/>
            <person name="Oshima A."/>
            <person name="Sasaki N."/>
            <person name="Aotsuka S."/>
            <person name="Yoshikawa Y."/>
            <person name="Matsunawa H."/>
            <person name="Ichihara T."/>
            <person name="Shiohata N."/>
            <person name="Sano S."/>
            <person name="Moriya S."/>
            <person name="Momiyama H."/>
            <person name="Satoh N."/>
            <person name="Takami S."/>
            <person name="Terashima Y."/>
            <person name="Suzuki O."/>
            <person name="Nakagawa S."/>
            <person name="Senoh A."/>
            <person name="Mizoguchi H."/>
            <person name="Goto Y."/>
            <person name="Shimizu F."/>
            <person name="Wakebe H."/>
            <person name="Hishigaki H."/>
            <person name="Watanabe T."/>
            <person name="Sugiyama A."/>
            <person name="Takemoto M."/>
            <person name="Kawakami B."/>
            <person name="Yamazaki M."/>
            <person name="Watanabe K."/>
            <person name="Kumagai A."/>
            <person name="Itakura S."/>
            <person name="Fukuzumi Y."/>
            <person name="Fujimori Y."/>
            <person name="Komiyama M."/>
            <person name="Tashiro H."/>
            <person name="Tanigami A."/>
            <person name="Fujiwara T."/>
            <person name="Ono T."/>
            <person name="Yamada K."/>
            <person name="Fujii Y."/>
            <person name="Ozaki K."/>
            <person name="Hirao M."/>
            <person name="Ohmori Y."/>
            <person name="Kawabata A."/>
            <person name="Hikiji T."/>
            <person name="Kobatake N."/>
            <person name="Inagaki H."/>
            <person name="Ikema Y."/>
            <person name="Okamoto S."/>
            <person name="Okitani R."/>
            <person name="Kawakami T."/>
            <person name="Noguchi S."/>
            <person name="Itoh T."/>
            <person name="Shigeta K."/>
            <person name="Senba T."/>
            <person name="Matsumura K."/>
            <person name="Nakajima Y."/>
            <person name="Mizuno T."/>
            <person name="Morinaga M."/>
            <person name="Sasaki M."/>
            <person name="Togashi T."/>
            <person name="Oyama M."/>
            <person name="Hata H."/>
            <person name="Watanabe M."/>
            <person name="Komatsu T."/>
            <person name="Mizushima-Sugano J."/>
            <person name="Satoh T."/>
            <person name="Shirai Y."/>
            <person name="Takahashi Y."/>
            <person name="Nakagawa K."/>
            <person name="Okumura K."/>
            <person name="Nagase T."/>
            <person name="Nomura N."/>
            <person name="Kikuchi H."/>
            <person name="Masuho Y."/>
            <person name="Yamashita R."/>
            <person name="Nakai K."/>
            <person name="Yada T."/>
            <person name="Nakamura Y."/>
            <person name="Ohara O."/>
            <person name="Isogai T."/>
            <person name="Sugano S."/>
        </authorList>
    </citation>
    <scope>NUCLEOTIDE SEQUENCE [LARGE SCALE MRNA] (ISOFORM 2)</scope>
    <source>
        <tissue>Mammary gland</tissue>
    </source>
</reference>
<reference key="4">
    <citation type="journal article" date="2003" name="Nature">
        <title>The DNA sequence and analysis of human chromosome 6.</title>
        <authorList>
            <person name="Mungall A.J."/>
            <person name="Palmer S.A."/>
            <person name="Sims S.K."/>
            <person name="Edwards C.A."/>
            <person name="Ashurst J.L."/>
            <person name="Wilming L."/>
            <person name="Jones M.C."/>
            <person name="Horton R."/>
            <person name="Hunt S.E."/>
            <person name="Scott C.E."/>
            <person name="Gilbert J.G.R."/>
            <person name="Clamp M.E."/>
            <person name="Bethel G."/>
            <person name="Milne S."/>
            <person name="Ainscough R."/>
            <person name="Almeida J.P."/>
            <person name="Ambrose K.D."/>
            <person name="Andrews T.D."/>
            <person name="Ashwell R.I.S."/>
            <person name="Babbage A.K."/>
            <person name="Bagguley C.L."/>
            <person name="Bailey J."/>
            <person name="Banerjee R."/>
            <person name="Barker D.J."/>
            <person name="Barlow K.F."/>
            <person name="Bates K."/>
            <person name="Beare D.M."/>
            <person name="Beasley H."/>
            <person name="Beasley O."/>
            <person name="Bird C.P."/>
            <person name="Blakey S.E."/>
            <person name="Bray-Allen S."/>
            <person name="Brook J."/>
            <person name="Brown A.J."/>
            <person name="Brown J.Y."/>
            <person name="Burford D.C."/>
            <person name="Burrill W."/>
            <person name="Burton J."/>
            <person name="Carder C."/>
            <person name="Carter N.P."/>
            <person name="Chapman J.C."/>
            <person name="Clark S.Y."/>
            <person name="Clark G."/>
            <person name="Clee C.M."/>
            <person name="Clegg S."/>
            <person name="Cobley V."/>
            <person name="Collier R.E."/>
            <person name="Collins J.E."/>
            <person name="Colman L.K."/>
            <person name="Corby N.R."/>
            <person name="Coville G.J."/>
            <person name="Culley K.M."/>
            <person name="Dhami P."/>
            <person name="Davies J."/>
            <person name="Dunn M."/>
            <person name="Earthrowl M.E."/>
            <person name="Ellington A.E."/>
            <person name="Evans K.A."/>
            <person name="Faulkner L."/>
            <person name="Francis M.D."/>
            <person name="Frankish A."/>
            <person name="Frankland J."/>
            <person name="French L."/>
            <person name="Garner P."/>
            <person name="Garnett J."/>
            <person name="Ghori M.J."/>
            <person name="Gilby L.M."/>
            <person name="Gillson C.J."/>
            <person name="Glithero R.J."/>
            <person name="Grafham D.V."/>
            <person name="Grant M."/>
            <person name="Gribble S."/>
            <person name="Griffiths C."/>
            <person name="Griffiths M.N.D."/>
            <person name="Hall R."/>
            <person name="Halls K.S."/>
            <person name="Hammond S."/>
            <person name="Harley J.L."/>
            <person name="Hart E.A."/>
            <person name="Heath P.D."/>
            <person name="Heathcott R."/>
            <person name="Holmes S.J."/>
            <person name="Howden P.J."/>
            <person name="Howe K.L."/>
            <person name="Howell G.R."/>
            <person name="Huckle E."/>
            <person name="Humphray S.J."/>
            <person name="Humphries M.D."/>
            <person name="Hunt A.R."/>
            <person name="Johnson C.M."/>
            <person name="Joy A.A."/>
            <person name="Kay M."/>
            <person name="Keenan S.J."/>
            <person name="Kimberley A.M."/>
            <person name="King A."/>
            <person name="Laird G.K."/>
            <person name="Langford C."/>
            <person name="Lawlor S."/>
            <person name="Leongamornlert D.A."/>
            <person name="Leversha M."/>
            <person name="Lloyd C.R."/>
            <person name="Lloyd D.M."/>
            <person name="Loveland J.E."/>
            <person name="Lovell J."/>
            <person name="Martin S."/>
            <person name="Mashreghi-Mohammadi M."/>
            <person name="Maslen G.L."/>
            <person name="Matthews L."/>
            <person name="McCann O.T."/>
            <person name="McLaren S.J."/>
            <person name="McLay K."/>
            <person name="McMurray A."/>
            <person name="Moore M.J.F."/>
            <person name="Mullikin J.C."/>
            <person name="Niblett D."/>
            <person name="Nickerson T."/>
            <person name="Novik K.L."/>
            <person name="Oliver K."/>
            <person name="Overton-Larty E.K."/>
            <person name="Parker A."/>
            <person name="Patel R."/>
            <person name="Pearce A.V."/>
            <person name="Peck A.I."/>
            <person name="Phillimore B.J.C.T."/>
            <person name="Phillips S."/>
            <person name="Plumb R.W."/>
            <person name="Porter K.M."/>
            <person name="Ramsey Y."/>
            <person name="Ranby S.A."/>
            <person name="Rice C.M."/>
            <person name="Ross M.T."/>
            <person name="Searle S.M."/>
            <person name="Sehra H.K."/>
            <person name="Sheridan E."/>
            <person name="Skuce C.D."/>
            <person name="Smith S."/>
            <person name="Smith M."/>
            <person name="Spraggon L."/>
            <person name="Squares S.L."/>
            <person name="Steward C.A."/>
            <person name="Sycamore N."/>
            <person name="Tamlyn-Hall G."/>
            <person name="Tester J."/>
            <person name="Theaker A.J."/>
            <person name="Thomas D.W."/>
            <person name="Thorpe A."/>
            <person name="Tracey A."/>
            <person name="Tromans A."/>
            <person name="Tubby B."/>
            <person name="Wall M."/>
            <person name="Wallis J.M."/>
            <person name="West A.P."/>
            <person name="White S.S."/>
            <person name="Whitehead S.L."/>
            <person name="Whittaker H."/>
            <person name="Wild A."/>
            <person name="Willey D.J."/>
            <person name="Wilmer T.E."/>
            <person name="Wood J.M."/>
            <person name="Wray P.W."/>
            <person name="Wyatt J.C."/>
            <person name="Young L."/>
            <person name="Younger R.M."/>
            <person name="Bentley D.R."/>
            <person name="Coulson A."/>
            <person name="Durbin R.M."/>
            <person name="Hubbard T."/>
            <person name="Sulston J.E."/>
            <person name="Dunham I."/>
            <person name="Rogers J."/>
            <person name="Beck S."/>
        </authorList>
    </citation>
    <scope>NUCLEOTIDE SEQUENCE [LARGE SCALE GENOMIC DNA]</scope>
</reference>
<reference key="5">
    <citation type="journal article" date="2004" name="Genome Res.">
        <title>The status, quality, and expansion of the NIH full-length cDNA project: the Mammalian Gene Collection (MGC).</title>
        <authorList>
            <consortium name="The MGC Project Team"/>
        </authorList>
    </citation>
    <scope>NUCLEOTIDE SEQUENCE [LARGE SCALE MRNA] (ISOFORM 1)</scope>
    <source>
        <tissue>Lymph</tissue>
    </source>
</reference>
<reference key="6">
    <citation type="journal article" date="2004" name="Protein Sci.">
        <title>Signal peptide prediction based on analysis of experimentally verified cleavage sites.</title>
        <authorList>
            <person name="Zhang Z."/>
            <person name="Henzel W.J."/>
        </authorList>
    </citation>
    <scope>PROTEIN SEQUENCE OF 30-44</scope>
</reference>
<reference key="7">
    <citation type="journal article" date="2009" name="Nat. Biotechnol.">
        <title>Mass-spectrometric identification and relative quantification of N-linked cell surface glycoproteins.</title>
        <authorList>
            <person name="Wollscheid B."/>
            <person name="Bausch-Fluck D."/>
            <person name="Henderson C."/>
            <person name="O'Brien R."/>
            <person name="Bibel M."/>
            <person name="Schiess R."/>
            <person name="Aebersold R."/>
            <person name="Watts J.D."/>
        </authorList>
    </citation>
    <scope>GLYCOSYLATION [LARGE SCALE ANALYSIS] AT ASN-115</scope>
    <source>
        <tissue>Leukemic T-cell</tissue>
    </source>
</reference>
<reference key="8">
    <citation type="journal article" date="2010" name="J. Leukoc. Biol.">
        <title>Stimulation of human butyrophilin 3 molecules results in negative regulation of cellular immunity.</title>
        <authorList>
            <person name="Yamashiro H."/>
            <person name="Yoshizaki S."/>
            <person name="Tadaki T."/>
            <person name="Egawa K."/>
            <person name="Seo N."/>
        </authorList>
    </citation>
    <scope>GLYCOSYLATION</scope>
    <scope>TISSUE SPECIFICITY</scope>
</reference>
<reference key="9">
    <citation type="journal article" date="2011" name="Eur. J. Immunol.">
        <title>Differential role for CD277 as a co-regulator of the immune signal in T and NK cells.</title>
        <authorList>
            <person name="Messal N."/>
            <person name="Mamessier E."/>
            <person name="Sylvain A."/>
            <person name="Celis-Gutierrez J."/>
            <person name="Thibult M.L."/>
            <person name="Chetaille B."/>
            <person name="Firaguay G."/>
            <person name="Pastor S."/>
            <person name="Guillaume Y."/>
            <person name="Wang Q."/>
            <person name="Hirsch I."/>
            <person name="Nunes J.A."/>
            <person name="Olive D."/>
        </authorList>
    </citation>
    <scope>SUBCELLULAR LOCATION</scope>
</reference>
<reference key="10">
    <citation type="journal article" date="2012" name="Blood">
        <title>Key implication of CD277/butyrophilin-3 (BTN3A) in cellular stress sensing by a major human gammadelta T-cell subset.</title>
        <authorList>
            <person name="Harly C."/>
            <person name="Guillaume Y."/>
            <person name="Nedellec S."/>
            <person name="Peigne C.M."/>
            <person name="Monkkonen H."/>
            <person name="Monkkonen J."/>
            <person name="Li J."/>
            <person name="Kuball J."/>
            <person name="Adams E.J."/>
            <person name="Netzer S."/>
            <person name="Dechanet-Merville J."/>
            <person name="Leger A."/>
            <person name="Herrmann T."/>
            <person name="Breathnach R."/>
            <person name="Olive D."/>
            <person name="Bonneville M."/>
            <person name="Scotet E."/>
        </authorList>
    </citation>
    <scope>FUNCTION</scope>
    <scope>SUBCELLULAR LOCATION</scope>
</reference>
<reference key="11">
    <citation type="journal article" date="2014" name="J. Proteomics">
        <title>An enzyme assisted RP-RPLC approach for in-depth analysis of human liver phosphoproteome.</title>
        <authorList>
            <person name="Bian Y."/>
            <person name="Song C."/>
            <person name="Cheng K."/>
            <person name="Dong M."/>
            <person name="Wang F."/>
            <person name="Huang J."/>
            <person name="Sun D."/>
            <person name="Wang L."/>
            <person name="Ye M."/>
            <person name="Zou H."/>
        </authorList>
    </citation>
    <scope>IDENTIFICATION BY MASS SPECTROMETRY [LARGE SCALE ANALYSIS]</scope>
    <source>
        <tissue>Liver</tissue>
    </source>
</reference>
<reference key="12">
    <citation type="journal article" date="2012" name="J. Biol. Chem.">
        <title>The molecular basis for modulation of human Vgamma9Vdelta2 T cell responses by CD277/butyrophilin-3 (BTN3A)-specific antibodies.</title>
        <authorList>
            <person name="Palakodeti A."/>
            <person name="Sandstrom A."/>
            <person name="Sundaresan L."/>
            <person name="Harly C."/>
            <person name="Nedellec S."/>
            <person name="Olive D."/>
            <person name="Scotet E."/>
            <person name="Bonneville M."/>
            <person name="Adams E.J."/>
        </authorList>
    </citation>
    <scope>X-RAY CRYSTALLOGRAPHY (2.38 ANGSTROMS) OF 30-246</scope>
    <scope>SUBUNIT</scope>
    <scope>DISULFIDE BONDS</scope>
</reference>
<keyword id="KW-0002">3D-structure</keyword>
<keyword id="KW-1064">Adaptive immunity</keyword>
<keyword id="KW-0025">Alternative splicing</keyword>
<keyword id="KW-1003">Cell membrane</keyword>
<keyword id="KW-0903">Direct protein sequencing</keyword>
<keyword id="KW-1015">Disulfide bond</keyword>
<keyword id="KW-0325">Glycoprotein</keyword>
<keyword id="KW-0391">Immunity</keyword>
<keyword id="KW-0393">Immunoglobulin domain</keyword>
<keyword id="KW-0472">Membrane</keyword>
<keyword id="KW-1267">Proteomics identification</keyword>
<keyword id="KW-1185">Reference proteome</keyword>
<keyword id="KW-0677">Repeat</keyword>
<keyword id="KW-0732">Signal</keyword>
<keyword id="KW-0812">Transmembrane</keyword>
<keyword id="KW-1133">Transmembrane helix</keyword>
<evidence type="ECO:0000255" key="1"/>
<evidence type="ECO:0000255" key="2">
    <source>
        <dbReference type="PROSITE-ProRule" id="PRU00114"/>
    </source>
</evidence>
<evidence type="ECO:0000255" key="3">
    <source>
        <dbReference type="PROSITE-ProRule" id="PRU00548"/>
    </source>
</evidence>
<evidence type="ECO:0000256" key="4">
    <source>
        <dbReference type="SAM" id="MobiDB-lite"/>
    </source>
</evidence>
<evidence type="ECO:0000269" key="5">
    <source>
    </source>
</evidence>
<evidence type="ECO:0000269" key="6">
    <source>
    </source>
</evidence>
<evidence type="ECO:0000269" key="7">
    <source>
    </source>
</evidence>
<evidence type="ECO:0000269" key="8">
    <source>
    </source>
</evidence>
<evidence type="ECO:0000269" key="9">
    <source>
    </source>
</evidence>
<evidence type="ECO:0000269" key="10">
    <source>
    </source>
</evidence>
<evidence type="ECO:0000303" key="11">
    <source>
    </source>
</evidence>
<evidence type="ECO:0000305" key="12"/>
<evidence type="ECO:0007829" key="13">
    <source>
        <dbReference type="PDB" id="4F8T"/>
    </source>
</evidence>
<evidence type="ECO:0007829" key="14">
    <source>
        <dbReference type="PDB" id="5ZZ3"/>
    </source>
</evidence>
<evidence type="ECO:0007829" key="15">
    <source>
        <dbReference type="PDB" id="6J0G"/>
    </source>
</evidence>
<evidence type="ECO:0007829" key="16">
    <source>
        <dbReference type="PDB" id="6J0L"/>
    </source>
</evidence>
<dbReference type="EMBL" id="U90548">
    <property type="protein sequence ID" value="AAB53426.1"/>
    <property type="molecule type" value="mRNA"/>
</dbReference>
<dbReference type="EMBL" id="BT007251">
    <property type="protein sequence ID" value="AAP35915.1"/>
    <property type="molecule type" value="mRNA"/>
</dbReference>
<dbReference type="EMBL" id="AK301553">
    <property type="protein sequence ID" value="BAG63049.1"/>
    <property type="molecule type" value="mRNA"/>
</dbReference>
<dbReference type="EMBL" id="AL021917">
    <property type="status" value="NOT_ANNOTATED_CDS"/>
    <property type="molecule type" value="Genomic_DNA"/>
</dbReference>
<dbReference type="EMBL" id="BC015815">
    <property type="protein sequence ID" value="AAH15815.1"/>
    <property type="molecule type" value="mRNA"/>
</dbReference>
<dbReference type="CCDS" id="CCDS4611.1">
    <molecule id="O00478-1"/>
</dbReference>
<dbReference type="CCDS" id="CCDS4612.2">
    <molecule id="O00478-2"/>
</dbReference>
<dbReference type="RefSeq" id="NP_001229732.1">
    <property type="nucleotide sequence ID" value="NM_001242803.1"/>
</dbReference>
<dbReference type="RefSeq" id="NP_008925.1">
    <molecule id="O00478-1"/>
    <property type="nucleotide sequence ID" value="NM_006994.5"/>
</dbReference>
<dbReference type="RefSeq" id="NP_932078.2">
    <molecule id="O00478-2"/>
    <property type="nucleotide sequence ID" value="NM_197974.3"/>
</dbReference>
<dbReference type="PDB" id="4F8T">
    <property type="method" value="X-ray"/>
    <property type="resolution" value="2.38 A"/>
    <property type="chains" value="A=30-246"/>
</dbReference>
<dbReference type="PDB" id="5ZZ3">
    <property type="method" value="X-ray"/>
    <property type="resolution" value="3.00 A"/>
    <property type="chains" value="A=328-584"/>
</dbReference>
<dbReference type="PDB" id="6J0G">
    <property type="method" value="X-ray"/>
    <property type="resolution" value="1.60 A"/>
    <property type="chains" value="A/B/C/D=328-515"/>
</dbReference>
<dbReference type="PDB" id="6J0K">
    <property type="method" value="X-ray"/>
    <property type="resolution" value="2.00 A"/>
    <property type="chains" value="A/B=328-515"/>
</dbReference>
<dbReference type="PDB" id="6J0L">
    <property type="method" value="X-ray"/>
    <property type="resolution" value="1.95 A"/>
    <property type="chains" value="A/B=328-515"/>
</dbReference>
<dbReference type="PDBsum" id="4F8T"/>
<dbReference type="PDBsum" id="5ZZ3"/>
<dbReference type="PDBsum" id="6J0G"/>
<dbReference type="PDBsum" id="6J0K"/>
<dbReference type="PDBsum" id="6J0L"/>
<dbReference type="SMR" id="O00478"/>
<dbReference type="BioGRID" id="115657">
    <property type="interactions" value="37"/>
</dbReference>
<dbReference type="FunCoup" id="O00478">
    <property type="interactions" value="437"/>
</dbReference>
<dbReference type="IntAct" id="O00478">
    <property type="interactions" value="18"/>
</dbReference>
<dbReference type="STRING" id="9606.ENSP00000244519"/>
<dbReference type="GlyConnect" id="1050">
    <property type="glycosylation" value="1 N-Linked glycan (1 site)"/>
</dbReference>
<dbReference type="GlyCosmos" id="O00478">
    <property type="glycosylation" value="1 site, No reported glycans"/>
</dbReference>
<dbReference type="GlyGen" id="O00478">
    <property type="glycosylation" value="1 site, 1 N-linked glycan (1 site)"/>
</dbReference>
<dbReference type="iPTMnet" id="O00478"/>
<dbReference type="PhosphoSitePlus" id="O00478"/>
<dbReference type="BioMuta" id="BTN3A3"/>
<dbReference type="jPOST" id="O00478"/>
<dbReference type="MassIVE" id="O00478"/>
<dbReference type="PaxDb" id="9606-ENSP00000244519"/>
<dbReference type="PeptideAtlas" id="O00478"/>
<dbReference type="ProteomicsDB" id="19486"/>
<dbReference type="ProteomicsDB" id="47923">
    <molecule id="O00478-1"/>
</dbReference>
<dbReference type="Pumba" id="O00478"/>
<dbReference type="Antibodypedia" id="2341">
    <property type="antibodies" value="134 antibodies from 21 providers"/>
</dbReference>
<dbReference type="DNASU" id="10384"/>
<dbReference type="Ensembl" id="ENST00000244519.7">
    <molecule id="O00478-1"/>
    <property type="protein sequence ID" value="ENSP00000244519.2"/>
    <property type="gene ID" value="ENSG00000111801.16"/>
</dbReference>
<dbReference type="Ensembl" id="ENST00000361232.7">
    <molecule id="O00478-2"/>
    <property type="protein sequence ID" value="ENSP00000355238.3"/>
    <property type="gene ID" value="ENSG00000111801.16"/>
</dbReference>
<dbReference type="GeneID" id="10384"/>
<dbReference type="KEGG" id="hsa:10384"/>
<dbReference type="MANE-Select" id="ENST00000244519.7">
    <property type="protein sequence ID" value="ENSP00000244519.2"/>
    <property type="RefSeq nucleotide sequence ID" value="NM_006994.5"/>
    <property type="RefSeq protein sequence ID" value="NP_008925.1"/>
</dbReference>
<dbReference type="UCSC" id="uc003nhz.3">
    <molecule id="O00478-1"/>
    <property type="organism name" value="human"/>
</dbReference>
<dbReference type="AGR" id="HGNC:1140"/>
<dbReference type="CTD" id="10384"/>
<dbReference type="DisGeNET" id="10384"/>
<dbReference type="GeneCards" id="BTN3A3"/>
<dbReference type="HGNC" id="HGNC:1140">
    <property type="gene designation" value="BTN3A3"/>
</dbReference>
<dbReference type="HPA" id="ENSG00000111801">
    <property type="expression patterns" value="Low tissue specificity"/>
</dbReference>
<dbReference type="MIM" id="613595">
    <property type="type" value="gene"/>
</dbReference>
<dbReference type="neXtProt" id="NX_O00478"/>
<dbReference type="OpenTargets" id="ENSG00000111801"/>
<dbReference type="PharmGKB" id="PA25461"/>
<dbReference type="VEuPathDB" id="HostDB:ENSG00000111801"/>
<dbReference type="eggNOG" id="ENOG502QSRZ">
    <property type="taxonomic scope" value="Eukaryota"/>
</dbReference>
<dbReference type="GeneTree" id="ENSGT00940000162723"/>
<dbReference type="HOGENOM" id="CLU_013137_22_2_1"/>
<dbReference type="InParanoid" id="O00478"/>
<dbReference type="OMA" id="WVKMIPE"/>
<dbReference type="OrthoDB" id="8901134at2759"/>
<dbReference type="PAN-GO" id="O00478">
    <property type="GO annotations" value="4 GO annotations based on evolutionary models"/>
</dbReference>
<dbReference type="PhylomeDB" id="O00478"/>
<dbReference type="TreeFam" id="TF331083"/>
<dbReference type="PathwayCommons" id="O00478"/>
<dbReference type="Reactome" id="R-HSA-8851680">
    <property type="pathway name" value="Butyrophilin (BTN) family interactions"/>
</dbReference>
<dbReference type="SignaLink" id="O00478"/>
<dbReference type="BioGRID-ORCS" id="10384">
    <property type="hits" value="14 hits in 1152 CRISPR screens"/>
</dbReference>
<dbReference type="EvolutionaryTrace" id="O00478"/>
<dbReference type="GeneWiki" id="BTN3A3"/>
<dbReference type="GenomeRNAi" id="10384"/>
<dbReference type="Pharos" id="O00478">
    <property type="development level" value="Tbio"/>
</dbReference>
<dbReference type="PRO" id="PR:O00478"/>
<dbReference type="Proteomes" id="UP000005640">
    <property type="component" value="Chromosome 6"/>
</dbReference>
<dbReference type="RNAct" id="O00478">
    <property type="molecule type" value="protein"/>
</dbReference>
<dbReference type="Bgee" id="ENSG00000111801">
    <property type="expression patterns" value="Expressed in granulocyte and 203 other cell types or tissues"/>
</dbReference>
<dbReference type="ExpressionAtlas" id="O00478">
    <property type="expression patterns" value="baseline and differential"/>
</dbReference>
<dbReference type="GO" id="GO:0005829">
    <property type="term" value="C:cytosol"/>
    <property type="evidence" value="ECO:0000314"/>
    <property type="project" value="HPA"/>
</dbReference>
<dbReference type="GO" id="GO:0009897">
    <property type="term" value="C:external side of plasma membrane"/>
    <property type="evidence" value="ECO:0000318"/>
    <property type="project" value="GO_Central"/>
</dbReference>
<dbReference type="GO" id="GO:0043231">
    <property type="term" value="C:intracellular membrane-bounded organelle"/>
    <property type="evidence" value="ECO:0000314"/>
    <property type="project" value="HPA"/>
</dbReference>
<dbReference type="GO" id="GO:0016020">
    <property type="term" value="C:membrane"/>
    <property type="evidence" value="ECO:0007005"/>
    <property type="project" value="UniProtKB"/>
</dbReference>
<dbReference type="GO" id="GO:0016604">
    <property type="term" value="C:nuclear body"/>
    <property type="evidence" value="ECO:0000314"/>
    <property type="project" value="HPA"/>
</dbReference>
<dbReference type="GO" id="GO:0005654">
    <property type="term" value="C:nucleoplasm"/>
    <property type="evidence" value="ECO:0000314"/>
    <property type="project" value="HPA"/>
</dbReference>
<dbReference type="GO" id="GO:0005886">
    <property type="term" value="C:plasma membrane"/>
    <property type="evidence" value="ECO:0000314"/>
    <property type="project" value="HPA"/>
</dbReference>
<dbReference type="GO" id="GO:0005102">
    <property type="term" value="F:signaling receptor binding"/>
    <property type="evidence" value="ECO:0000318"/>
    <property type="project" value="GO_Central"/>
</dbReference>
<dbReference type="GO" id="GO:0001817">
    <property type="term" value="P:regulation of cytokine production"/>
    <property type="evidence" value="ECO:0000318"/>
    <property type="project" value="GO_Central"/>
</dbReference>
<dbReference type="GO" id="GO:0002456">
    <property type="term" value="P:T cell mediated immunity"/>
    <property type="evidence" value="ECO:0000315"/>
    <property type="project" value="UniProtKB"/>
</dbReference>
<dbReference type="GO" id="GO:0050852">
    <property type="term" value="P:T cell receptor signaling pathway"/>
    <property type="evidence" value="ECO:0000318"/>
    <property type="project" value="GO_Central"/>
</dbReference>
<dbReference type="CDD" id="cd05713">
    <property type="entry name" value="IgV_MOG_like"/>
    <property type="match status" value="1"/>
</dbReference>
<dbReference type="CDD" id="cd15820">
    <property type="entry name" value="SPRY_PRY_BTN3"/>
    <property type="match status" value="1"/>
</dbReference>
<dbReference type="FunFam" id="2.60.120.920:FF:000004">
    <property type="entry name" value="Butyrophilin subfamily 1 member A1"/>
    <property type="match status" value="1"/>
</dbReference>
<dbReference type="FunFam" id="2.60.40.10:FF:000088">
    <property type="entry name" value="Butyrophilin subfamily 1 member A1"/>
    <property type="match status" value="1"/>
</dbReference>
<dbReference type="FunFam" id="2.60.40.10:FF:000208">
    <property type="entry name" value="Butyrophilin subfamily 1 member A1"/>
    <property type="match status" value="1"/>
</dbReference>
<dbReference type="Gene3D" id="2.60.120.920">
    <property type="match status" value="1"/>
</dbReference>
<dbReference type="Gene3D" id="2.60.40.10">
    <property type="entry name" value="Immunoglobulins"/>
    <property type="match status" value="2"/>
</dbReference>
<dbReference type="InterPro" id="IPR001870">
    <property type="entry name" value="B30.2/SPRY"/>
</dbReference>
<dbReference type="InterPro" id="IPR043136">
    <property type="entry name" value="B30.2/SPRY_sf"/>
</dbReference>
<dbReference type="InterPro" id="IPR053896">
    <property type="entry name" value="BTN3A2-like_Ig-C"/>
</dbReference>
<dbReference type="InterPro" id="IPR003879">
    <property type="entry name" value="Butyrophylin_SPRY"/>
</dbReference>
<dbReference type="InterPro" id="IPR013320">
    <property type="entry name" value="ConA-like_dom_sf"/>
</dbReference>
<dbReference type="InterPro" id="IPR007110">
    <property type="entry name" value="Ig-like_dom"/>
</dbReference>
<dbReference type="InterPro" id="IPR036179">
    <property type="entry name" value="Ig-like_dom_sf"/>
</dbReference>
<dbReference type="InterPro" id="IPR013783">
    <property type="entry name" value="Ig-like_fold"/>
</dbReference>
<dbReference type="InterPro" id="IPR003599">
    <property type="entry name" value="Ig_sub"/>
</dbReference>
<dbReference type="InterPro" id="IPR013106">
    <property type="entry name" value="Ig_V-set"/>
</dbReference>
<dbReference type="InterPro" id="IPR050504">
    <property type="entry name" value="IgSF_BTN/MOG"/>
</dbReference>
<dbReference type="InterPro" id="IPR006574">
    <property type="entry name" value="PRY"/>
</dbReference>
<dbReference type="InterPro" id="IPR003877">
    <property type="entry name" value="SPRY_dom"/>
</dbReference>
<dbReference type="InterPro" id="IPR037954">
    <property type="entry name" value="SPRY_PRY_BTN3"/>
</dbReference>
<dbReference type="PANTHER" id="PTHR24100">
    <property type="entry name" value="BUTYROPHILIN"/>
    <property type="match status" value="1"/>
</dbReference>
<dbReference type="PANTHER" id="PTHR24100:SF56">
    <property type="entry name" value="BUTYROPHILIN SUBFAMILY 3 MEMBER A3"/>
    <property type="match status" value="1"/>
</dbReference>
<dbReference type="Pfam" id="PF22705">
    <property type="entry name" value="C2-set_3"/>
    <property type="match status" value="1"/>
</dbReference>
<dbReference type="Pfam" id="PF13765">
    <property type="entry name" value="PRY"/>
    <property type="match status" value="1"/>
</dbReference>
<dbReference type="Pfam" id="PF00622">
    <property type="entry name" value="SPRY"/>
    <property type="match status" value="1"/>
</dbReference>
<dbReference type="Pfam" id="PF07686">
    <property type="entry name" value="V-set"/>
    <property type="match status" value="1"/>
</dbReference>
<dbReference type="PRINTS" id="PR01407">
    <property type="entry name" value="BUTYPHLNCDUF"/>
</dbReference>
<dbReference type="SMART" id="SM00409">
    <property type="entry name" value="IG"/>
    <property type="match status" value="1"/>
</dbReference>
<dbReference type="SMART" id="SM00406">
    <property type="entry name" value="IGv"/>
    <property type="match status" value="1"/>
</dbReference>
<dbReference type="SMART" id="SM00589">
    <property type="entry name" value="PRY"/>
    <property type="match status" value="1"/>
</dbReference>
<dbReference type="SMART" id="SM00449">
    <property type="entry name" value="SPRY"/>
    <property type="match status" value="1"/>
</dbReference>
<dbReference type="SUPFAM" id="SSF49899">
    <property type="entry name" value="Concanavalin A-like lectins/glucanases"/>
    <property type="match status" value="1"/>
</dbReference>
<dbReference type="SUPFAM" id="SSF48726">
    <property type="entry name" value="Immunoglobulin"/>
    <property type="match status" value="2"/>
</dbReference>
<dbReference type="PROSITE" id="PS50188">
    <property type="entry name" value="B302_SPRY"/>
    <property type="match status" value="1"/>
</dbReference>
<dbReference type="PROSITE" id="PS50835">
    <property type="entry name" value="IG_LIKE"/>
    <property type="match status" value="2"/>
</dbReference>
<organism>
    <name type="scientific">Homo sapiens</name>
    <name type="common">Human</name>
    <dbReference type="NCBI Taxonomy" id="9606"/>
    <lineage>
        <taxon>Eukaryota</taxon>
        <taxon>Metazoa</taxon>
        <taxon>Chordata</taxon>
        <taxon>Craniata</taxon>
        <taxon>Vertebrata</taxon>
        <taxon>Euteleostomi</taxon>
        <taxon>Mammalia</taxon>
        <taxon>Eutheria</taxon>
        <taxon>Euarchontoglires</taxon>
        <taxon>Primates</taxon>
        <taxon>Haplorrhini</taxon>
        <taxon>Catarrhini</taxon>
        <taxon>Hominidae</taxon>
        <taxon>Homo</taxon>
    </lineage>
</organism>
<accession>O00478</accession>
<accession>B4DWI7</accession>
<accession>E9PCP5</accession>
<feature type="signal peptide" evidence="5">
    <location>
        <begin position="1"/>
        <end position="29"/>
    </location>
</feature>
<feature type="chain" id="PRO_0000014534" description="Butyrophilin subfamily 3 member A3">
    <location>
        <begin position="30"/>
        <end position="584"/>
    </location>
</feature>
<feature type="topological domain" description="Extracellular" evidence="1">
    <location>
        <begin position="30"/>
        <end position="248"/>
    </location>
</feature>
<feature type="transmembrane region" description="Helical" evidence="1">
    <location>
        <begin position="249"/>
        <end position="269"/>
    </location>
</feature>
<feature type="topological domain" description="Cytoplasmic" evidence="1">
    <location>
        <begin position="270"/>
        <end position="584"/>
    </location>
</feature>
<feature type="domain" description="Ig-like V-type 1">
    <location>
        <begin position="30"/>
        <end position="139"/>
    </location>
</feature>
<feature type="domain" description="Ig-like V-type 2">
    <location>
        <begin position="145"/>
        <end position="236"/>
    </location>
</feature>
<feature type="domain" description="B30.2/SPRY" evidence="3">
    <location>
        <begin position="322"/>
        <end position="518"/>
    </location>
</feature>
<feature type="region of interest" description="Disordered" evidence="4">
    <location>
        <begin position="519"/>
        <end position="584"/>
    </location>
</feature>
<feature type="compositionally biased region" description="Polar residues" evidence="4">
    <location>
        <begin position="566"/>
        <end position="575"/>
    </location>
</feature>
<feature type="glycosylation site" description="N-linked (GlcNAc...) asparagine" evidence="6">
    <location>
        <position position="115"/>
    </location>
</feature>
<feature type="disulfide bond" evidence="2 10">
    <location>
        <begin position="52"/>
        <end position="126"/>
    </location>
</feature>
<feature type="disulfide bond" evidence="2 10">
    <location>
        <begin position="166"/>
        <end position="220"/>
    </location>
</feature>
<feature type="splice variant" id="VSP_045063" description="In isoform 2." evidence="11">
    <location>
        <begin position="1"/>
        <end position="42"/>
    </location>
</feature>
<feature type="splice variant" id="VSP_045064" description="In isoform 2." evidence="11">
    <location>
        <begin position="307"/>
        <end position="313"/>
    </location>
</feature>
<feature type="sequence conflict" description="In Ref. 3; BAG63049." evidence="12" ref="3">
    <original>L</original>
    <variation>P</variation>
    <location>
        <position position="229"/>
    </location>
</feature>
<feature type="strand" evidence="13">
    <location>
        <begin position="32"/>
        <end position="34"/>
    </location>
</feature>
<feature type="strand" evidence="13">
    <location>
        <begin position="40"/>
        <end position="43"/>
    </location>
</feature>
<feature type="strand" evidence="13">
    <location>
        <begin position="48"/>
        <end position="56"/>
    </location>
</feature>
<feature type="strand" evidence="13">
    <location>
        <begin position="63"/>
        <end position="69"/>
    </location>
</feature>
<feature type="turn" evidence="13">
    <location>
        <begin position="70"/>
        <end position="73"/>
    </location>
</feature>
<feature type="strand" evidence="13">
    <location>
        <begin position="74"/>
        <end position="80"/>
    </location>
</feature>
<feature type="helix" evidence="13">
    <location>
        <begin position="91"/>
        <end position="93"/>
    </location>
</feature>
<feature type="strand" evidence="13">
    <location>
        <begin position="96"/>
        <end position="100"/>
    </location>
</feature>
<feature type="helix" evidence="13">
    <location>
        <begin position="104"/>
        <end position="106"/>
    </location>
</feature>
<feature type="strand" evidence="13">
    <location>
        <begin position="108"/>
        <end position="115"/>
    </location>
</feature>
<feature type="helix" evidence="13">
    <location>
        <begin position="118"/>
        <end position="120"/>
    </location>
</feature>
<feature type="strand" evidence="13">
    <location>
        <begin position="122"/>
        <end position="130"/>
    </location>
</feature>
<feature type="strand" evidence="13">
    <location>
        <begin position="133"/>
        <end position="145"/>
    </location>
</feature>
<feature type="strand" evidence="13">
    <location>
        <begin position="151"/>
        <end position="158"/>
    </location>
</feature>
<feature type="strand" evidence="13">
    <location>
        <begin position="161"/>
        <end position="173"/>
    </location>
</feature>
<feature type="strand" evidence="13">
    <location>
        <begin position="176"/>
        <end position="181"/>
    </location>
</feature>
<feature type="strand" evidence="13">
    <location>
        <begin position="202"/>
        <end position="210"/>
    </location>
</feature>
<feature type="strand" evidence="13">
    <location>
        <begin position="218"/>
        <end position="224"/>
    </location>
</feature>
<feature type="turn" evidence="13">
    <location>
        <begin position="225"/>
        <end position="228"/>
    </location>
</feature>
<feature type="strand" evidence="13">
    <location>
        <begin position="229"/>
        <end position="235"/>
    </location>
</feature>
<feature type="turn" evidence="13">
    <location>
        <begin position="239"/>
        <end position="241"/>
    </location>
</feature>
<feature type="helix" evidence="15">
    <location>
        <begin position="328"/>
        <end position="336"/>
    </location>
</feature>
<feature type="strand" evidence="15">
    <location>
        <begin position="337"/>
        <end position="339"/>
    </location>
</feature>
<feature type="turn" evidence="15">
    <location>
        <begin position="346"/>
        <end position="348"/>
    </location>
</feature>
<feature type="strand" evidence="15">
    <location>
        <begin position="353"/>
        <end position="355"/>
    </location>
</feature>
<feature type="strand" evidence="15">
    <location>
        <begin position="359"/>
        <end position="364"/>
    </location>
</feature>
<feature type="strand" evidence="15">
    <location>
        <begin position="379"/>
        <end position="381"/>
    </location>
</feature>
<feature type="strand" evidence="15">
    <location>
        <begin position="383"/>
        <end position="387"/>
    </location>
</feature>
<feature type="strand" evidence="15">
    <location>
        <begin position="390"/>
        <end position="400"/>
    </location>
</feature>
<feature type="strand" evidence="15">
    <location>
        <begin position="407"/>
        <end position="413"/>
    </location>
</feature>
<feature type="strand" evidence="14">
    <location>
        <begin position="418"/>
        <end position="421"/>
    </location>
</feature>
<feature type="helix" evidence="15">
    <location>
        <begin position="427"/>
        <end position="429"/>
    </location>
</feature>
<feature type="strand" evidence="15">
    <location>
        <begin position="431"/>
        <end position="437"/>
    </location>
</feature>
<feature type="turn" evidence="15">
    <location>
        <begin position="438"/>
        <end position="440"/>
    </location>
</feature>
<feature type="strand" evidence="15">
    <location>
        <begin position="441"/>
        <end position="444"/>
    </location>
</feature>
<feature type="strand" evidence="14">
    <location>
        <begin position="446"/>
        <end position="448"/>
    </location>
</feature>
<feature type="strand" evidence="16">
    <location>
        <begin position="450"/>
        <end position="452"/>
    </location>
</feature>
<feature type="strand" evidence="15">
    <location>
        <begin position="459"/>
        <end position="466"/>
    </location>
</feature>
<feature type="turn" evidence="15">
    <location>
        <begin position="467"/>
        <end position="470"/>
    </location>
</feature>
<feature type="strand" evidence="15">
    <location>
        <begin position="471"/>
        <end position="476"/>
    </location>
</feature>
<feature type="turn" evidence="15">
    <location>
        <begin position="477"/>
        <end position="479"/>
    </location>
</feature>
<feature type="strand" evidence="15">
    <location>
        <begin position="482"/>
        <end position="485"/>
    </location>
</feature>
<feature type="strand" evidence="15">
    <location>
        <begin position="495"/>
        <end position="500"/>
    </location>
</feature>
<feature type="strand" evidence="15">
    <location>
        <begin position="509"/>
        <end position="511"/>
    </location>
</feature>
<sequence>MKMASSLAFLLLNFHVSLFLVQLLTPCSAQFSVLGPSGPILAMVGEDADLPCHLFPTMSAETMELRWVSSSLRQVVNVYADGKEVEDRQSAPYRGRTSILRDGITAGKAALRIHNVTASDSGKYLCYFQDGDFYEKALVELKVAALGSDLHIEVKGYEDGGIHLECRSTGWYPQPQIKWSDTKGENIPAVEAPVVADGVGLYAVAASVIMRGSSGGGVSCIIRNSLLGLEKTASISIADPFFRSAQPWIAALAGTLPISLLLLAGASYFLWRQQKEKIALSRETEREREMKEMGYAATEQEISLREKLQEELKWRKIQYMARGEKSLAYHEWKMALFKPADVILDPDTANAILLVSEDQRSVQRAEEPRDLPDNPERFEWRYCVLGCENFTSGRHYWEVEVGDRKEWHIGVCSKNVERKKGWVKMTPENGYWTMGLTDGNKYRALTEPRTNLKLPEPPRKVGIFLDYETGEISFYNATDGSHIYTFPHASFSEPLYPVFRILTLEPTALTICPIPKEVESSPDPDLVPDHSLETPLTPGLANESGEPQAEVTSLLLPAHPGAEVSPSATTNQNHKLQARTEALY</sequence>
<comment type="function">
    <text evidence="9">Plays a role in T-cell responses in the adaptive immune response.</text>
</comment>
<comment type="subunit">
    <text evidence="10">Homodimer.</text>
</comment>
<comment type="interaction">
    <interactant intactId="EBI-2837387">
        <id>O00478</id>
    </interactant>
    <interactant intactId="EBI-2809309">
        <id>O00481</id>
        <label>BTN3A1</label>
    </interactant>
    <organismsDiffer>false</organismsDiffer>
    <experiments>3</experiments>
</comment>
<comment type="subcellular location">
    <subcellularLocation>
        <location evidence="8 9">Cell membrane</location>
        <topology evidence="8 9">Single-pass type I membrane protein</topology>
    </subcellularLocation>
</comment>
<comment type="alternative products">
    <event type="alternative splicing"/>
    <isoform>
        <id>O00478-1</id>
        <name>1</name>
        <sequence type="displayed"/>
    </isoform>
    <isoform>
        <id>O00478-2</id>
        <name>2</name>
        <sequence type="described" ref="VSP_045063 VSP_045064"/>
    </isoform>
</comment>
<comment type="tissue specificity">
    <text evidence="7">Detected in peripheral blood mononuclear cells and in T-cells (at protein level). Detected in spleen and lymphocytes.</text>
</comment>
<comment type="PTM">
    <text evidence="6 7">N-glycosylated.</text>
</comment>
<comment type="similarity">
    <text evidence="12">Belongs to the immunoglobulin superfamily. BTN/MOG family.</text>
</comment>
<name>BT3A3_HUMAN</name>
<gene>
    <name type="primary">BTN3A3</name>
    <name type="synonym">BTF3</name>
</gene>
<protein>
    <recommendedName>
        <fullName>Butyrophilin subfamily 3 member A3</fullName>
    </recommendedName>
</protein>